<keyword id="KW-0963">Cytoplasm</keyword>
<keyword id="KW-0843">Virulence</keyword>
<gene>
    <name evidence="1" type="primary">esaB</name>
    <name type="ordered locus">SAS0261</name>
</gene>
<feature type="chain" id="PRO_0000087047" description="Type VII secretion system accessory factor EsaB">
    <location>
        <begin position="1"/>
        <end position="80"/>
    </location>
</feature>
<comment type="function">
    <text evidence="1">Seems to regulate secreted factors that contribute to the establishment of persistent infections in the host.</text>
</comment>
<comment type="subcellular location">
    <subcellularLocation>
        <location evidence="1">Cytoplasm</location>
    </subcellularLocation>
</comment>
<comment type="similarity">
    <text evidence="2">Belongs to the EsaB family.</text>
</comment>
<dbReference type="EMBL" id="BX571857">
    <property type="protein sequence ID" value="CAG42032.1"/>
    <property type="molecule type" value="Genomic_DNA"/>
</dbReference>
<dbReference type="RefSeq" id="WP_001071606.1">
    <property type="nucleotide sequence ID" value="NC_002953.3"/>
</dbReference>
<dbReference type="SMR" id="Q6GCI7"/>
<dbReference type="GeneID" id="98344609"/>
<dbReference type="KEGG" id="sas:SAS0261"/>
<dbReference type="HOGENOM" id="CLU_189011_2_0_9"/>
<dbReference type="GO" id="GO:0005737">
    <property type="term" value="C:cytoplasm"/>
    <property type="evidence" value="ECO:0007669"/>
    <property type="project" value="UniProtKB-SubCell"/>
</dbReference>
<dbReference type="Gene3D" id="3.10.20.90">
    <property type="entry name" value="Phosphatidylinositol 3-kinase Catalytic Subunit, Chain A, domain 1"/>
    <property type="match status" value="1"/>
</dbReference>
<dbReference type="InterPro" id="IPR014921">
    <property type="entry name" value="EsaB"/>
</dbReference>
<dbReference type="InterPro" id="IPR029071">
    <property type="entry name" value="Ubiquitin-like_domsf"/>
</dbReference>
<dbReference type="InterPro" id="IPR024962">
    <property type="entry name" value="YukD-like"/>
</dbReference>
<dbReference type="Pfam" id="PF08817">
    <property type="entry name" value="YukD"/>
    <property type="match status" value="1"/>
</dbReference>
<dbReference type="PIRSF" id="PIRSF037793">
    <property type="entry name" value="DUF_ubiquitin-like_YukD"/>
    <property type="match status" value="1"/>
</dbReference>
<dbReference type="SUPFAM" id="SSF54236">
    <property type="entry name" value="Ubiquitin-like"/>
    <property type="match status" value="1"/>
</dbReference>
<accession>Q6GCI7</accession>
<sequence>MNQHVKVTFDFTNYNYGTYDLAVPAYLPIKNLIALVLDSLDISIFDVNTQIKVMTKGQLLVENDRLIDYQIADGDILKLL</sequence>
<evidence type="ECO:0000250" key="1">
    <source>
        <dbReference type="UniProtKB" id="P0C050"/>
    </source>
</evidence>
<evidence type="ECO:0000305" key="2"/>
<protein>
    <recommendedName>
        <fullName evidence="1">Type VII secretion system accessory factor EsaB</fullName>
    </recommendedName>
</protein>
<reference key="1">
    <citation type="journal article" date="2004" name="Proc. Natl. Acad. Sci. U.S.A.">
        <title>Complete genomes of two clinical Staphylococcus aureus strains: evidence for the rapid evolution of virulence and drug resistance.</title>
        <authorList>
            <person name="Holden M.T.G."/>
            <person name="Feil E.J."/>
            <person name="Lindsay J.A."/>
            <person name="Peacock S.J."/>
            <person name="Day N.P.J."/>
            <person name="Enright M.C."/>
            <person name="Foster T.J."/>
            <person name="Moore C.E."/>
            <person name="Hurst L."/>
            <person name="Atkin R."/>
            <person name="Barron A."/>
            <person name="Bason N."/>
            <person name="Bentley S.D."/>
            <person name="Chillingworth C."/>
            <person name="Chillingworth T."/>
            <person name="Churcher C."/>
            <person name="Clark L."/>
            <person name="Corton C."/>
            <person name="Cronin A."/>
            <person name="Doggett J."/>
            <person name="Dowd L."/>
            <person name="Feltwell T."/>
            <person name="Hance Z."/>
            <person name="Harris B."/>
            <person name="Hauser H."/>
            <person name="Holroyd S."/>
            <person name="Jagels K."/>
            <person name="James K.D."/>
            <person name="Lennard N."/>
            <person name="Line A."/>
            <person name="Mayes R."/>
            <person name="Moule S."/>
            <person name="Mungall K."/>
            <person name="Ormond D."/>
            <person name="Quail M.A."/>
            <person name="Rabbinowitsch E."/>
            <person name="Rutherford K.M."/>
            <person name="Sanders M."/>
            <person name="Sharp S."/>
            <person name="Simmonds M."/>
            <person name="Stevens K."/>
            <person name="Whitehead S."/>
            <person name="Barrell B.G."/>
            <person name="Spratt B.G."/>
            <person name="Parkhill J."/>
        </authorList>
    </citation>
    <scope>NUCLEOTIDE SEQUENCE [LARGE SCALE GENOMIC DNA]</scope>
    <source>
        <strain>MSSA476</strain>
    </source>
</reference>
<organism>
    <name type="scientific">Staphylococcus aureus (strain MSSA476)</name>
    <dbReference type="NCBI Taxonomy" id="282459"/>
    <lineage>
        <taxon>Bacteria</taxon>
        <taxon>Bacillati</taxon>
        <taxon>Bacillota</taxon>
        <taxon>Bacilli</taxon>
        <taxon>Bacillales</taxon>
        <taxon>Staphylococcaceae</taxon>
        <taxon>Staphylococcus</taxon>
    </lineage>
</organism>
<proteinExistence type="inferred from homology"/>
<name>ESAB_STAAS</name>